<proteinExistence type="evidence at transcript level"/>
<name>CATA3_NICPL</name>
<comment type="function">
    <text>Occurs in almost all aerobically respiring organisms and serves to protect cells from the toxic effects of hydrogen peroxide.</text>
</comment>
<comment type="catalytic activity">
    <reaction evidence="2">
        <text>2 H2O2 = O2 + 2 H2O</text>
        <dbReference type="Rhea" id="RHEA:20309"/>
        <dbReference type="ChEBI" id="CHEBI:15377"/>
        <dbReference type="ChEBI" id="CHEBI:15379"/>
        <dbReference type="ChEBI" id="CHEBI:16240"/>
        <dbReference type="EC" id="1.11.1.6"/>
    </reaction>
</comment>
<comment type="cofactor">
    <cofactor>
        <name>heme</name>
        <dbReference type="ChEBI" id="CHEBI:30413"/>
    </cofactor>
</comment>
<comment type="subunit">
    <text evidence="1">Homotetramer.</text>
</comment>
<comment type="subcellular location">
    <subcellularLocation>
        <location evidence="3">Peroxisome</location>
    </subcellularLocation>
</comment>
<comment type="induction">
    <text>By 3-aminotriazole.</text>
</comment>
<comment type="similarity">
    <text evidence="3">Belongs to the catalase family.</text>
</comment>
<dbReference type="EC" id="1.11.1.6"/>
<dbReference type="EMBL" id="Z36977">
    <property type="protein sequence ID" value="CAA85426.1"/>
    <property type="molecule type" value="mRNA"/>
</dbReference>
<dbReference type="PIR" id="T16969">
    <property type="entry name" value="T16969"/>
</dbReference>
<dbReference type="SMR" id="P49317"/>
<dbReference type="GO" id="GO:0005777">
    <property type="term" value="C:peroxisome"/>
    <property type="evidence" value="ECO:0007669"/>
    <property type="project" value="UniProtKB-SubCell"/>
</dbReference>
<dbReference type="GO" id="GO:0005886">
    <property type="term" value="C:plasma membrane"/>
    <property type="evidence" value="ECO:0007669"/>
    <property type="project" value="TreeGrafter"/>
</dbReference>
<dbReference type="GO" id="GO:0004096">
    <property type="term" value="F:catalase activity"/>
    <property type="evidence" value="ECO:0007669"/>
    <property type="project" value="UniProtKB-EC"/>
</dbReference>
<dbReference type="GO" id="GO:0020037">
    <property type="term" value="F:heme binding"/>
    <property type="evidence" value="ECO:0007669"/>
    <property type="project" value="InterPro"/>
</dbReference>
<dbReference type="GO" id="GO:0046872">
    <property type="term" value="F:metal ion binding"/>
    <property type="evidence" value="ECO:0007669"/>
    <property type="project" value="UniProtKB-KW"/>
</dbReference>
<dbReference type="GO" id="GO:0042744">
    <property type="term" value="P:hydrogen peroxide catabolic process"/>
    <property type="evidence" value="ECO:0007669"/>
    <property type="project" value="UniProtKB-KW"/>
</dbReference>
<dbReference type="GO" id="GO:0042542">
    <property type="term" value="P:response to hydrogen peroxide"/>
    <property type="evidence" value="ECO:0007669"/>
    <property type="project" value="TreeGrafter"/>
</dbReference>
<dbReference type="CDD" id="cd08154">
    <property type="entry name" value="catalase_clade_1"/>
    <property type="match status" value="1"/>
</dbReference>
<dbReference type="FunFam" id="2.40.180.10:FF:000002">
    <property type="entry name" value="Catalase"/>
    <property type="match status" value="1"/>
</dbReference>
<dbReference type="Gene3D" id="2.40.180.10">
    <property type="entry name" value="Catalase core domain"/>
    <property type="match status" value="1"/>
</dbReference>
<dbReference type="InterPro" id="IPR018028">
    <property type="entry name" value="Catalase"/>
</dbReference>
<dbReference type="InterPro" id="IPR024708">
    <property type="entry name" value="Catalase_AS"/>
</dbReference>
<dbReference type="InterPro" id="IPR024711">
    <property type="entry name" value="Catalase_clade1/3"/>
</dbReference>
<dbReference type="InterPro" id="IPR011614">
    <property type="entry name" value="Catalase_core"/>
</dbReference>
<dbReference type="InterPro" id="IPR002226">
    <property type="entry name" value="Catalase_haem_BS"/>
</dbReference>
<dbReference type="InterPro" id="IPR010582">
    <property type="entry name" value="Catalase_immune_responsive"/>
</dbReference>
<dbReference type="InterPro" id="IPR020835">
    <property type="entry name" value="Catalase_sf"/>
</dbReference>
<dbReference type="PANTHER" id="PTHR11465">
    <property type="entry name" value="CATALASE"/>
    <property type="match status" value="1"/>
</dbReference>
<dbReference type="PANTHER" id="PTHR11465:SF23">
    <property type="entry name" value="CATALASE-2"/>
    <property type="match status" value="1"/>
</dbReference>
<dbReference type="Pfam" id="PF00199">
    <property type="entry name" value="Catalase"/>
    <property type="match status" value="1"/>
</dbReference>
<dbReference type="Pfam" id="PF06628">
    <property type="entry name" value="Catalase-rel"/>
    <property type="match status" value="1"/>
</dbReference>
<dbReference type="PIRSF" id="PIRSF038928">
    <property type="entry name" value="Catalase_clade1-3"/>
    <property type="match status" value="1"/>
</dbReference>
<dbReference type="PRINTS" id="PR00067">
    <property type="entry name" value="CATALASE"/>
</dbReference>
<dbReference type="SMART" id="SM01060">
    <property type="entry name" value="Catalase"/>
    <property type="match status" value="1"/>
</dbReference>
<dbReference type="SUPFAM" id="SSF56634">
    <property type="entry name" value="Heme-dependent catalase-like"/>
    <property type="match status" value="1"/>
</dbReference>
<dbReference type="PROSITE" id="PS00437">
    <property type="entry name" value="CATALASE_1"/>
    <property type="match status" value="1"/>
</dbReference>
<dbReference type="PROSITE" id="PS00438">
    <property type="entry name" value="CATALASE_2"/>
    <property type="match status" value="1"/>
</dbReference>
<dbReference type="PROSITE" id="PS51402">
    <property type="entry name" value="CATALASE_3"/>
    <property type="match status" value="1"/>
</dbReference>
<keyword id="KW-0349">Heme</keyword>
<keyword id="KW-0376">Hydrogen peroxide</keyword>
<keyword id="KW-0408">Iron</keyword>
<keyword id="KW-0479">Metal-binding</keyword>
<keyword id="KW-0560">Oxidoreductase</keyword>
<keyword id="KW-0575">Peroxidase</keyword>
<keyword id="KW-0576">Peroxisome</keyword>
<reference key="1">
    <citation type="journal article" date="1994" name="FEBS Lett.">
        <title>Molecular identification of catalases from Nicotiana plumbaginifolia (L.).</title>
        <authorList>
            <person name="Willekens H."/>
            <person name="Villarroel R."/>
            <person name="van Montagu M."/>
            <person name="Inze D."/>
            <person name="van Camp W."/>
        </authorList>
    </citation>
    <scope>NUCLEOTIDE SEQUENCE [MRNA]</scope>
    <source>
        <tissue>Flower</tissue>
    </source>
</reference>
<evidence type="ECO:0000250" key="1"/>
<evidence type="ECO:0000255" key="2">
    <source>
        <dbReference type="PROSITE-ProRule" id="PRU10013"/>
    </source>
</evidence>
<evidence type="ECO:0000305" key="3"/>
<organism>
    <name type="scientific">Nicotiana plumbaginifolia</name>
    <name type="common">Leadwort-leaved tobacco</name>
    <name type="synonym">Tex-Mex tobacco</name>
    <dbReference type="NCBI Taxonomy" id="4092"/>
    <lineage>
        <taxon>Eukaryota</taxon>
        <taxon>Viridiplantae</taxon>
        <taxon>Streptophyta</taxon>
        <taxon>Embryophyta</taxon>
        <taxon>Tracheophyta</taxon>
        <taxon>Spermatophyta</taxon>
        <taxon>Magnoliopsida</taxon>
        <taxon>eudicotyledons</taxon>
        <taxon>Gunneridae</taxon>
        <taxon>Pentapetalae</taxon>
        <taxon>asterids</taxon>
        <taxon>lamiids</taxon>
        <taxon>Solanales</taxon>
        <taxon>Solanaceae</taxon>
        <taxon>Nicotianoideae</taxon>
        <taxon>Nicotianeae</taxon>
        <taxon>Nicotiana</taxon>
    </lineage>
</organism>
<sequence>MDPYKYRPSSANNSPFWTTNSGAPVWNNNSSMTVGTRGPILLEDYHLVEKLANFDRERIPERVVHARGASAKGFFEVTHDITHLTCADFLRAPGVQTPVIVRFSTVIHERGSPETLRDPRGFAVKFYTREGNFDLVGNNFPVFFVRDGMKFPDMVHALKPNPKSHIQENWRILDFFSHHPESLHMFSFLFDDLGVPQDYRHMEGSGVNTYMLINKAGKAHYVKFHWKPTCGVKCLLEEEAIKVGGANHSHATKDLYDSIAAGNYPEWKLFIQIIDPDHEDRFDFDPLDVTKTWPEDILPLQPVGRLVLNKNIDNFFAENEQLAFWPAIVVPGVYCSDDKLLQTRIFSYSDAQRHRLGPNYLQLPVNAPKCAHHNNHHEGFMNFMHRDEEVNYFPSRFDPCRHAEQYPIPPCVLTGKRDKCIIEKENNFKQPGERYRSWAPDRQERFICRWVDALSDPRVTHEIRSIWFSYWSQADKTLGQKIASRLNVRPTM</sequence>
<protein>
    <recommendedName>
        <fullName>Catalase isozyme 3</fullName>
        <ecNumber>1.11.1.6</ecNumber>
    </recommendedName>
</protein>
<feature type="chain" id="PRO_0000084951" description="Catalase isozyme 3">
    <location>
        <begin position="1"/>
        <end position="492"/>
    </location>
</feature>
<feature type="active site" evidence="2">
    <location>
        <position position="65"/>
    </location>
</feature>
<feature type="active site" evidence="2">
    <location>
        <position position="138"/>
    </location>
</feature>
<feature type="binding site" description="axial binding residue" evidence="1">
    <location>
        <position position="348"/>
    </location>
    <ligand>
        <name>heme</name>
        <dbReference type="ChEBI" id="CHEBI:30413"/>
    </ligand>
    <ligandPart>
        <name>Fe</name>
        <dbReference type="ChEBI" id="CHEBI:18248"/>
    </ligandPart>
</feature>
<gene>
    <name type="primary">CAT3</name>
</gene>
<accession>P49317</accession>